<comment type="function">
    <text evidence="1">Destroys radicals which are normally produced within the cells and which are toxic to biological systems.</text>
</comment>
<comment type="cofactor">
    <cofactor evidence="2">
        <name>heme b</name>
        <dbReference type="ChEBI" id="CHEBI:60344"/>
    </cofactor>
    <text evidence="2">Binds 1 heme b (iron(II)-protoporphyrin IX) group per subunit.</text>
</comment>
<comment type="similarity">
    <text evidence="4">Belongs to the peroxidase family. Cytochrome c peroxidase subfamily.</text>
</comment>
<organism>
    <name type="scientific">Cryptococcus neoformans var. neoformans serotype D (strain JEC21 / ATCC MYA-565)</name>
    <name type="common">Filobasidiella neoformans</name>
    <dbReference type="NCBI Taxonomy" id="214684"/>
    <lineage>
        <taxon>Eukaryota</taxon>
        <taxon>Fungi</taxon>
        <taxon>Dikarya</taxon>
        <taxon>Basidiomycota</taxon>
        <taxon>Agaricomycotina</taxon>
        <taxon>Tremellomycetes</taxon>
        <taxon>Tremellales</taxon>
        <taxon>Cryptococcaceae</taxon>
        <taxon>Cryptococcus</taxon>
        <taxon>Cryptococcus neoformans species complex</taxon>
    </lineage>
</organism>
<keyword id="KW-0349">Heme</keyword>
<keyword id="KW-0408">Iron</keyword>
<keyword id="KW-0479">Metal-binding</keyword>
<keyword id="KW-0560">Oxidoreductase</keyword>
<keyword id="KW-0575">Peroxidase</keyword>
<keyword id="KW-1185">Reference proteome</keyword>
<sequence>MASVKEGDYQALKEEIKKIMKQPGYDDGSAGPVLVRLAWHASGNFSLVEHNGGSNGAGMRFPPESVDPANAGLHYAISFLLPLQSANSWISHADLWTLAGVTAIEAMGGPQIPWEPGRLDYESEQAAVEHRGDVSNRLPDGALGAAHIRDVFGRMGFSDQEIVALSGAHNLGRCHADRSGFDGPWVVNPTRFSNQYFKLLLRPIWKPRQWDGPFQYEAIVAGTRLMMLPTDMALIEDPSFRPWVEKYAADQNLFFKDFANAFGKLIELGVDRDDTGFARLAKKAAEEGKPLDKTAPPAGDETCPVSGAVGGGVQRAAGGGGCPFMAMQNREAKL</sequence>
<gene>
    <name type="ordered locus">CNE03890</name>
</gene>
<feature type="chain" id="PRO_0000055585" description="Putative heme-binding peroxidase">
    <location>
        <begin position="1"/>
        <end position="334"/>
    </location>
</feature>
<feature type="active site" description="Proton acceptor" evidence="2 3">
    <location>
        <position position="40"/>
    </location>
</feature>
<feature type="active site" description="Tryptophan radical intermediate" evidence="1">
    <location>
        <position position="185"/>
    </location>
</feature>
<feature type="binding site" description="axial binding residue" evidence="2">
    <location>
        <position position="169"/>
    </location>
    <ligand>
        <name>heme b</name>
        <dbReference type="ChEBI" id="CHEBI:60344"/>
    </ligand>
    <ligandPart>
        <name>Fe</name>
        <dbReference type="ChEBI" id="CHEBI:18248"/>
    </ligandPart>
</feature>
<feature type="site" description="Transition state stabilizer" evidence="2">
    <location>
        <position position="36"/>
    </location>
</feature>
<reference key="1">
    <citation type="journal article" date="2005" name="Science">
        <title>The genome of the basidiomycetous yeast and human pathogen Cryptococcus neoformans.</title>
        <authorList>
            <person name="Loftus B.J."/>
            <person name="Fung E."/>
            <person name="Roncaglia P."/>
            <person name="Rowley D."/>
            <person name="Amedeo P."/>
            <person name="Bruno D."/>
            <person name="Vamathevan J."/>
            <person name="Miranda M."/>
            <person name="Anderson I.J."/>
            <person name="Fraser J.A."/>
            <person name="Allen J.E."/>
            <person name="Bosdet I.E."/>
            <person name="Brent M.R."/>
            <person name="Chiu R."/>
            <person name="Doering T.L."/>
            <person name="Donlin M.J."/>
            <person name="D'Souza C.A."/>
            <person name="Fox D.S."/>
            <person name="Grinberg V."/>
            <person name="Fu J."/>
            <person name="Fukushima M."/>
            <person name="Haas B.J."/>
            <person name="Huang J.C."/>
            <person name="Janbon G."/>
            <person name="Jones S.J.M."/>
            <person name="Koo H.L."/>
            <person name="Krzywinski M.I."/>
            <person name="Kwon-Chung K.J."/>
            <person name="Lengeler K.B."/>
            <person name="Maiti R."/>
            <person name="Marra M.A."/>
            <person name="Marra R.E."/>
            <person name="Mathewson C.A."/>
            <person name="Mitchell T.G."/>
            <person name="Pertea M."/>
            <person name="Riggs F.R."/>
            <person name="Salzberg S.L."/>
            <person name="Schein J.E."/>
            <person name="Shvartsbeyn A."/>
            <person name="Shin H."/>
            <person name="Shumway M."/>
            <person name="Specht C.A."/>
            <person name="Suh B.B."/>
            <person name="Tenney A."/>
            <person name="Utterback T.R."/>
            <person name="Wickes B.L."/>
            <person name="Wortman J.R."/>
            <person name="Wye N.H."/>
            <person name="Kronstad J.W."/>
            <person name="Lodge J.K."/>
            <person name="Heitman J."/>
            <person name="Davis R.W."/>
            <person name="Fraser C.M."/>
            <person name="Hyman R.W."/>
        </authorList>
    </citation>
    <scope>NUCLEOTIDE SEQUENCE [LARGE SCALE GENOMIC DNA]</scope>
    <source>
        <strain>JEC21 / ATCC MYA-565</strain>
    </source>
</reference>
<proteinExistence type="inferred from homology"/>
<protein>
    <recommendedName>
        <fullName>Putative heme-binding peroxidase</fullName>
        <ecNumber>1.11.1.-</ecNumber>
    </recommendedName>
</protein>
<dbReference type="EC" id="1.11.1.-"/>
<dbReference type="EMBL" id="AE017345">
    <property type="protein sequence ID" value="AAW43705.2"/>
    <property type="molecule type" value="Genomic_DNA"/>
</dbReference>
<dbReference type="RefSeq" id="XP_024512921.1">
    <property type="nucleotide sequence ID" value="XM_024657271.1"/>
</dbReference>
<dbReference type="RefSeq" id="XP_571012.1">
    <property type="nucleotide sequence ID" value="XM_571012.1"/>
</dbReference>
<dbReference type="SMR" id="P0CP56"/>
<dbReference type="STRING" id="214684.P0CP56"/>
<dbReference type="PeroxiBase" id="2329">
    <property type="entry name" value="CnCcP02_JEC21"/>
</dbReference>
<dbReference type="PaxDb" id="214684-P0CP56"/>
<dbReference type="GeneID" id="3257737"/>
<dbReference type="eggNOG" id="ENOG502QR1E">
    <property type="taxonomic scope" value="Eukaryota"/>
</dbReference>
<dbReference type="HOGENOM" id="CLU_036959_0_1_1"/>
<dbReference type="InParanoid" id="P0CP56"/>
<dbReference type="Proteomes" id="UP000002149">
    <property type="component" value="Chromosome 5"/>
</dbReference>
<dbReference type="GO" id="GO:0020037">
    <property type="term" value="F:heme binding"/>
    <property type="evidence" value="ECO:0007669"/>
    <property type="project" value="InterPro"/>
</dbReference>
<dbReference type="GO" id="GO:0046872">
    <property type="term" value="F:metal ion binding"/>
    <property type="evidence" value="ECO:0007669"/>
    <property type="project" value="UniProtKB-KW"/>
</dbReference>
<dbReference type="GO" id="GO:0004601">
    <property type="term" value="F:peroxidase activity"/>
    <property type="evidence" value="ECO:0000318"/>
    <property type="project" value="GO_Central"/>
</dbReference>
<dbReference type="GO" id="GO:0034599">
    <property type="term" value="P:cellular response to oxidative stress"/>
    <property type="evidence" value="ECO:0000318"/>
    <property type="project" value="GO_Central"/>
</dbReference>
<dbReference type="GO" id="GO:0042744">
    <property type="term" value="P:hydrogen peroxide catabolic process"/>
    <property type="evidence" value="ECO:0000318"/>
    <property type="project" value="GO_Central"/>
</dbReference>
<dbReference type="GO" id="GO:0000302">
    <property type="term" value="P:response to reactive oxygen species"/>
    <property type="evidence" value="ECO:0000318"/>
    <property type="project" value="GO_Central"/>
</dbReference>
<dbReference type="FunFam" id="1.10.420.10:FF:000009">
    <property type="entry name" value="Ascorbate peroxidase"/>
    <property type="match status" value="1"/>
</dbReference>
<dbReference type="Gene3D" id="1.10.520.10">
    <property type="match status" value="1"/>
</dbReference>
<dbReference type="Gene3D" id="1.10.420.10">
    <property type="entry name" value="Peroxidase, domain 2"/>
    <property type="match status" value="1"/>
</dbReference>
<dbReference type="InterPro" id="IPR044831">
    <property type="entry name" value="Ccp1-like"/>
</dbReference>
<dbReference type="InterPro" id="IPR002016">
    <property type="entry name" value="Haem_peroxidase"/>
</dbReference>
<dbReference type="InterPro" id="IPR010255">
    <property type="entry name" value="Haem_peroxidase_sf"/>
</dbReference>
<dbReference type="InterPro" id="IPR002207">
    <property type="entry name" value="Peroxidase_I"/>
</dbReference>
<dbReference type="InterPro" id="IPR019794">
    <property type="entry name" value="Peroxidases_AS"/>
</dbReference>
<dbReference type="PANTHER" id="PTHR31356:SF36">
    <property type="entry name" value="L-ASCORBATE PEROXIDASE 3"/>
    <property type="match status" value="1"/>
</dbReference>
<dbReference type="PANTHER" id="PTHR31356">
    <property type="entry name" value="THYLAKOID LUMENAL 29 KDA PROTEIN, CHLOROPLASTIC-RELATED"/>
    <property type="match status" value="1"/>
</dbReference>
<dbReference type="Pfam" id="PF00141">
    <property type="entry name" value="peroxidase"/>
    <property type="match status" value="1"/>
</dbReference>
<dbReference type="PRINTS" id="PR00459">
    <property type="entry name" value="ASPEROXIDASE"/>
</dbReference>
<dbReference type="PRINTS" id="PR00458">
    <property type="entry name" value="PEROXIDASE"/>
</dbReference>
<dbReference type="SUPFAM" id="SSF48113">
    <property type="entry name" value="Heme-dependent peroxidases"/>
    <property type="match status" value="1"/>
</dbReference>
<dbReference type="PROSITE" id="PS00436">
    <property type="entry name" value="PEROXIDASE_2"/>
    <property type="match status" value="1"/>
</dbReference>
<dbReference type="PROSITE" id="PS50873">
    <property type="entry name" value="PEROXIDASE_4"/>
    <property type="match status" value="1"/>
</dbReference>
<name>CCPR2_CRYNJ</name>
<evidence type="ECO:0000250" key="1"/>
<evidence type="ECO:0000255" key="2">
    <source>
        <dbReference type="PROSITE-ProRule" id="PRU00297"/>
    </source>
</evidence>
<evidence type="ECO:0000255" key="3">
    <source>
        <dbReference type="PROSITE-ProRule" id="PRU10012"/>
    </source>
</evidence>
<evidence type="ECO:0000305" key="4"/>
<accession>P0CP56</accession>
<accession>Q55RZ4</accession>
<accession>Q5KGE6</accession>